<reference key="1">
    <citation type="journal article" date="2004" name="Nat. Genet.">
        <title>Complete sequencing and characterization of 21,243 full-length human cDNAs.</title>
        <authorList>
            <person name="Ota T."/>
            <person name="Suzuki Y."/>
            <person name="Nishikawa T."/>
            <person name="Otsuki T."/>
            <person name="Sugiyama T."/>
            <person name="Irie R."/>
            <person name="Wakamatsu A."/>
            <person name="Hayashi K."/>
            <person name="Sato H."/>
            <person name="Nagai K."/>
            <person name="Kimura K."/>
            <person name="Makita H."/>
            <person name="Sekine M."/>
            <person name="Obayashi M."/>
            <person name="Nishi T."/>
            <person name="Shibahara T."/>
            <person name="Tanaka T."/>
            <person name="Ishii S."/>
            <person name="Yamamoto J."/>
            <person name="Saito K."/>
            <person name="Kawai Y."/>
            <person name="Isono Y."/>
            <person name="Nakamura Y."/>
            <person name="Nagahari K."/>
            <person name="Murakami K."/>
            <person name="Yasuda T."/>
            <person name="Iwayanagi T."/>
            <person name="Wagatsuma M."/>
            <person name="Shiratori A."/>
            <person name="Sudo H."/>
            <person name="Hosoiri T."/>
            <person name="Kaku Y."/>
            <person name="Kodaira H."/>
            <person name="Kondo H."/>
            <person name="Sugawara M."/>
            <person name="Takahashi M."/>
            <person name="Kanda K."/>
            <person name="Yokoi T."/>
            <person name="Furuya T."/>
            <person name="Kikkawa E."/>
            <person name="Omura Y."/>
            <person name="Abe K."/>
            <person name="Kamihara K."/>
            <person name="Katsuta N."/>
            <person name="Sato K."/>
            <person name="Tanikawa M."/>
            <person name="Yamazaki M."/>
            <person name="Ninomiya K."/>
            <person name="Ishibashi T."/>
            <person name="Yamashita H."/>
            <person name="Murakawa K."/>
            <person name="Fujimori K."/>
            <person name="Tanai H."/>
            <person name="Kimata M."/>
            <person name="Watanabe M."/>
            <person name="Hiraoka S."/>
            <person name="Chiba Y."/>
            <person name="Ishida S."/>
            <person name="Ono Y."/>
            <person name="Takiguchi S."/>
            <person name="Watanabe S."/>
            <person name="Yosida M."/>
            <person name="Hotuta T."/>
            <person name="Kusano J."/>
            <person name="Kanehori K."/>
            <person name="Takahashi-Fujii A."/>
            <person name="Hara H."/>
            <person name="Tanase T.-O."/>
            <person name="Nomura Y."/>
            <person name="Togiya S."/>
            <person name="Komai F."/>
            <person name="Hara R."/>
            <person name="Takeuchi K."/>
            <person name="Arita M."/>
            <person name="Imose N."/>
            <person name="Musashino K."/>
            <person name="Yuuki H."/>
            <person name="Oshima A."/>
            <person name="Sasaki N."/>
            <person name="Aotsuka S."/>
            <person name="Yoshikawa Y."/>
            <person name="Matsunawa H."/>
            <person name="Ichihara T."/>
            <person name="Shiohata N."/>
            <person name="Sano S."/>
            <person name="Moriya S."/>
            <person name="Momiyama H."/>
            <person name="Satoh N."/>
            <person name="Takami S."/>
            <person name="Terashima Y."/>
            <person name="Suzuki O."/>
            <person name="Nakagawa S."/>
            <person name="Senoh A."/>
            <person name="Mizoguchi H."/>
            <person name="Goto Y."/>
            <person name="Shimizu F."/>
            <person name="Wakebe H."/>
            <person name="Hishigaki H."/>
            <person name="Watanabe T."/>
            <person name="Sugiyama A."/>
            <person name="Takemoto M."/>
            <person name="Kawakami B."/>
            <person name="Yamazaki M."/>
            <person name="Watanabe K."/>
            <person name="Kumagai A."/>
            <person name="Itakura S."/>
            <person name="Fukuzumi Y."/>
            <person name="Fujimori Y."/>
            <person name="Komiyama M."/>
            <person name="Tashiro H."/>
            <person name="Tanigami A."/>
            <person name="Fujiwara T."/>
            <person name="Ono T."/>
            <person name="Yamada K."/>
            <person name="Fujii Y."/>
            <person name="Ozaki K."/>
            <person name="Hirao M."/>
            <person name="Ohmori Y."/>
            <person name="Kawabata A."/>
            <person name="Hikiji T."/>
            <person name="Kobatake N."/>
            <person name="Inagaki H."/>
            <person name="Ikema Y."/>
            <person name="Okamoto S."/>
            <person name="Okitani R."/>
            <person name="Kawakami T."/>
            <person name="Noguchi S."/>
            <person name="Itoh T."/>
            <person name="Shigeta K."/>
            <person name="Senba T."/>
            <person name="Matsumura K."/>
            <person name="Nakajima Y."/>
            <person name="Mizuno T."/>
            <person name="Morinaga M."/>
            <person name="Sasaki M."/>
            <person name="Togashi T."/>
            <person name="Oyama M."/>
            <person name="Hata H."/>
            <person name="Watanabe M."/>
            <person name="Komatsu T."/>
            <person name="Mizushima-Sugano J."/>
            <person name="Satoh T."/>
            <person name="Shirai Y."/>
            <person name="Takahashi Y."/>
            <person name="Nakagawa K."/>
            <person name="Okumura K."/>
            <person name="Nagase T."/>
            <person name="Nomura N."/>
            <person name="Kikuchi H."/>
            <person name="Masuho Y."/>
            <person name="Yamashita R."/>
            <person name="Nakai K."/>
            <person name="Yada T."/>
            <person name="Nakamura Y."/>
            <person name="Ohara O."/>
            <person name="Isogai T."/>
            <person name="Sugano S."/>
        </authorList>
    </citation>
    <scope>NUCLEOTIDE SEQUENCE [LARGE SCALE MRNA] (ISOFORMS 1 AND 2)</scope>
    <source>
        <tissue>Teratocarcinoma</tissue>
    </source>
</reference>
<reference key="2">
    <citation type="journal article" date="2004" name="Nature">
        <title>The DNA sequence and biology of human chromosome 19.</title>
        <authorList>
            <person name="Grimwood J."/>
            <person name="Gordon L.A."/>
            <person name="Olsen A.S."/>
            <person name="Terry A."/>
            <person name="Schmutz J."/>
            <person name="Lamerdin J.E."/>
            <person name="Hellsten U."/>
            <person name="Goodstein D."/>
            <person name="Couronne O."/>
            <person name="Tran-Gyamfi M."/>
            <person name="Aerts A."/>
            <person name="Altherr M."/>
            <person name="Ashworth L."/>
            <person name="Bajorek E."/>
            <person name="Black S."/>
            <person name="Branscomb E."/>
            <person name="Caenepeel S."/>
            <person name="Carrano A.V."/>
            <person name="Caoile C."/>
            <person name="Chan Y.M."/>
            <person name="Christensen M."/>
            <person name="Cleland C.A."/>
            <person name="Copeland A."/>
            <person name="Dalin E."/>
            <person name="Dehal P."/>
            <person name="Denys M."/>
            <person name="Detter J.C."/>
            <person name="Escobar J."/>
            <person name="Flowers D."/>
            <person name="Fotopulos D."/>
            <person name="Garcia C."/>
            <person name="Georgescu A.M."/>
            <person name="Glavina T."/>
            <person name="Gomez M."/>
            <person name="Gonzales E."/>
            <person name="Groza M."/>
            <person name="Hammon N."/>
            <person name="Hawkins T."/>
            <person name="Haydu L."/>
            <person name="Ho I."/>
            <person name="Huang W."/>
            <person name="Israni S."/>
            <person name="Jett J."/>
            <person name="Kadner K."/>
            <person name="Kimball H."/>
            <person name="Kobayashi A."/>
            <person name="Larionov V."/>
            <person name="Leem S.-H."/>
            <person name="Lopez F."/>
            <person name="Lou Y."/>
            <person name="Lowry S."/>
            <person name="Malfatti S."/>
            <person name="Martinez D."/>
            <person name="McCready P.M."/>
            <person name="Medina C."/>
            <person name="Morgan J."/>
            <person name="Nelson K."/>
            <person name="Nolan M."/>
            <person name="Ovcharenko I."/>
            <person name="Pitluck S."/>
            <person name="Pollard M."/>
            <person name="Popkie A.P."/>
            <person name="Predki P."/>
            <person name="Quan G."/>
            <person name="Ramirez L."/>
            <person name="Rash S."/>
            <person name="Retterer J."/>
            <person name="Rodriguez A."/>
            <person name="Rogers S."/>
            <person name="Salamov A."/>
            <person name="Salazar A."/>
            <person name="She X."/>
            <person name="Smith D."/>
            <person name="Slezak T."/>
            <person name="Solovyev V."/>
            <person name="Thayer N."/>
            <person name="Tice H."/>
            <person name="Tsai M."/>
            <person name="Ustaszewska A."/>
            <person name="Vo N."/>
            <person name="Wagner M."/>
            <person name="Wheeler J."/>
            <person name="Wu K."/>
            <person name="Xie G."/>
            <person name="Yang J."/>
            <person name="Dubchak I."/>
            <person name="Furey T.S."/>
            <person name="DeJong P."/>
            <person name="Dickson M."/>
            <person name="Gordon D."/>
            <person name="Eichler E.E."/>
            <person name="Pennacchio L.A."/>
            <person name="Richardson P."/>
            <person name="Stubbs L."/>
            <person name="Rokhsar D.S."/>
            <person name="Myers R.M."/>
            <person name="Rubin E.M."/>
            <person name="Lucas S.M."/>
        </authorList>
    </citation>
    <scope>NUCLEOTIDE SEQUENCE [LARGE SCALE GENOMIC DNA]</scope>
</reference>
<reference key="3">
    <citation type="submission" date="2005-07" db="EMBL/GenBank/DDBJ databases">
        <authorList>
            <person name="Mural R.J."/>
            <person name="Istrail S."/>
            <person name="Sutton G.G."/>
            <person name="Florea L."/>
            <person name="Halpern A.L."/>
            <person name="Mobarry C.M."/>
            <person name="Lippert R."/>
            <person name="Walenz B."/>
            <person name="Shatkay H."/>
            <person name="Dew I."/>
            <person name="Miller J.R."/>
            <person name="Flanigan M.J."/>
            <person name="Edwards N.J."/>
            <person name="Bolanos R."/>
            <person name="Fasulo D."/>
            <person name="Halldorsson B.V."/>
            <person name="Hannenhalli S."/>
            <person name="Turner R."/>
            <person name="Yooseph S."/>
            <person name="Lu F."/>
            <person name="Nusskern D.R."/>
            <person name="Shue B.C."/>
            <person name="Zheng X.H."/>
            <person name="Zhong F."/>
            <person name="Delcher A.L."/>
            <person name="Huson D.H."/>
            <person name="Kravitz S.A."/>
            <person name="Mouchard L."/>
            <person name="Reinert K."/>
            <person name="Remington K.A."/>
            <person name="Clark A.G."/>
            <person name="Waterman M.S."/>
            <person name="Eichler E.E."/>
            <person name="Adams M.D."/>
            <person name="Hunkapiller M.W."/>
            <person name="Myers E.W."/>
            <person name="Venter J.C."/>
        </authorList>
    </citation>
    <scope>NUCLEOTIDE SEQUENCE [LARGE SCALE GENOMIC DNA]</scope>
</reference>
<reference key="4">
    <citation type="journal article" date="2004" name="Genome Res.">
        <title>The status, quality, and expansion of the NIH full-length cDNA project: the Mammalian Gene Collection (MGC).</title>
        <authorList>
            <consortium name="The MGC Project Team"/>
        </authorList>
    </citation>
    <scope>NUCLEOTIDE SEQUENCE [LARGE SCALE MRNA] (ISOFORM 1)</scope>
    <source>
        <tissue>Placenta</tissue>
    </source>
</reference>
<reference key="5">
    <citation type="journal article" date="2017" name="Nat. Struct. Mol. Biol.">
        <title>Site-specific mapping of the human SUMO proteome reveals co-modification with phosphorylation.</title>
        <authorList>
            <person name="Hendriks I.A."/>
            <person name="Lyon D."/>
            <person name="Young C."/>
            <person name="Jensen L.J."/>
            <person name="Vertegaal A.C."/>
            <person name="Nielsen M.L."/>
        </authorList>
    </citation>
    <scope>SUMOYLATION [LARGE SCALE ANALYSIS] AT LYS-223</scope>
    <scope>IDENTIFICATION BY MASS SPECTROMETRY [LARGE SCALE ANALYSIS]</scope>
</reference>
<proteinExistence type="evidence at protein level"/>
<sequence length="640" mass="74439">MAEAALVITPQIPMVTEEFVKPSQGHVTFEDIAVYFSQEEWGLLDEAQRCLYHDVMLENFSLMASVGCLHGIEAEEAPSEQTLSAQGVSQARTPKLGPSIPNAHSCEMCILVMKDILYLSEHQGTLPWQKPYTSVASGKWFSFGSNLQQHQNQDSGEKHIRKEESSALLLNSCKIPLSDNLFPCKDVEKDFPTILGLLQHQTTHSRQEYAHRSRETFQQRRYKCEQVFNEKVHVTEHQRVHTGEKAYKRREYGKSLNSKYLFVEHQRTHNAEKPYVCNICGKSFLHKQTLVGHQQRIHTRERSYVCIECGKSLSSKYSLVEHQRTHNGEKPYVCNVCGKSFRHKQTFVGHQQRIHTGERPYVCMECGKSFIHSYDRIRHQRVHTGEGAYQCSECGKSFIYKQSLLDHHRIHTGERPYECKECGKAFIHKKRLLEHQRIHTGEKPYVCIICGKSFIRSSDYMRHQRIHTGERAYECSDCGKAFISKQTLLKHHKIHTRERPYECSECGKGFYLEVKLLQHQRIHTREQLCECNECGKVFSHQKRLLEHQKVHTGEKPCECSECGKCFRHRTSLIQHQKVHSGERPYNCTACEKAFIYKNKLVEHQRIHTGEKPYECGKCGKAFNKRYSLVRHQKVHITEEP</sequence>
<protein>
    <recommendedName>
        <fullName>Zinc finger protein 549</fullName>
    </recommendedName>
</protein>
<keyword id="KW-0025">Alternative splicing</keyword>
<keyword id="KW-0238">DNA-binding</keyword>
<keyword id="KW-1017">Isopeptide bond</keyword>
<keyword id="KW-0479">Metal-binding</keyword>
<keyword id="KW-0539">Nucleus</keyword>
<keyword id="KW-1267">Proteomics identification</keyword>
<keyword id="KW-1185">Reference proteome</keyword>
<keyword id="KW-0677">Repeat</keyword>
<keyword id="KW-0804">Transcription</keyword>
<keyword id="KW-0805">Transcription regulation</keyword>
<keyword id="KW-0832">Ubl conjugation</keyword>
<keyword id="KW-0862">Zinc</keyword>
<keyword id="KW-0863">Zinc-finger</keyword>
<feature type="chain" id="PRO_0000234583" description="Zinc finger protein 549">
    <location>
        <begin position="1"/>
        <end position="640"/>
    </location>
</feature>
<feature type="domain" description="KRAB" evidence="2">
    <location>
        <begin position="27"/>
        <end position="140"/>
    </location>
</feature>
<feature type="zinc finger region" description="C2H2-type 1; degenerate" evidence="1">
    <location>
        <begin position="217"/>
        <end position="241"/>
    </location>
</feature>
<feature type="zinc finger region" description="C2H2-type 2; degenerate" evidence="1">
    <location>
        <begin position="247"/>
        <end position="269"/>
    </location>
</feature>
<feature type="zinc finger region" description="C2H2-type 3" evidence="1">
    <location>
        <begin position="275"/>
        <end position="298"/>
    </location>
</feature>
<feature type="zinc finger region" description="C2H2-type 4" evidence="1">
    <location>
        <begin position="304"/>
        <end position="326"/>
    </location>
</feature>
<feature type="zinc finger region" description="C2H2-type 5" evidence="1">
    <location>
        <begin position="332"/>
        <end position="355"/>
    </location>
</feature>
<feature type="zinc finger region" description="C2H2-type 6" evidence="1">
    <location>
        <begin position="361"/>
        <end position="383"/>
    </location>
</feature>
<feature type="zinc finger region" description="C2H2-type 7" evidence="1">
    <location>
        <begin position="389"/>
        <end position="411"/>
    </location>
</feature>
<feature type="zinc finger region" description="C2H2-type 8" evidence="1">
    <location>
        <begin position="417"/>
        <end position="439"/>
    </location>
</feature>
<feature type="zinc finger region" description="C2H2-type 9" evidence="1">
    <location>
        <begin position="445"/>
        <end position="467"/>
    </location>
</feature>
<feature type="zinc finger region" description="C2H2-type 10" evidence="1">
    <location>
        <begin position="473"/>
        <end position="495"/>
    </location>
</feature>
<feature type="zinc finger region" description="C2H2-type 11" evidence="1">
    <location>
        <begin position="501"/>
        <end position="523"/>
    </location>
</feature>
<feature type="zinc finger region" description="C2H2-type 12" evidence="1">
    <location>
        <begin position="529"/>
        <end position="551"/>
    </location>
</feature>
<feature type="zinc finger region" description="C2H2-type 13" evidence="1">
    <location>
        <begin position="557"/>
        <end position="579"/>
    </location>
</feature>
<feature type="zinc finger region" description="C2H2-type 14" evidence="1">
    <location>
        <begin position="585"/>
        <end position="607"/>
    </location>
</feature>
<feature type="zinc finger region" description="C2H2-type 15" evidence="1">
    <location>
        <begin position="613"/>
        <end position="635"/>
    </location>
</feature>
<feature type="cross-link" description="Glycyl lysine isopeptide (Lys-Gly) (interchain with G-Cter in SUMO2)" evidence="5">
    <location>
        <position position="223"/>
    </location>
</feature>
<feature type="splice variant" id="VSP_018379" description="In isoform 2." evidence="3">
    <location>
        <begin position="12"/>
        <end position="24"/>
    </location>
</feature>
<feature type="sequence variant" id="VAR_059921" description="In dbSNP:rs12461014.">
    <original>I</original>
    <variation>N</variation>
    <location>
        <position position="8"/>
    </location>
</feature>
<feature type="sequence conflict" description="In Ref. 1; BAC03834." evidence="4" ref="1">
    <original>S</original>
    <variation>P</variation>
    <location>
        <position position="84"/>
    </location>
</feature>
<comment type="function">
    <text>May be involved in transcriptional regulation.</text>
</comment>
<comment type="interaction">
    <interactant intactId="EBI-13046342">
        <id>Q6P9A3</id>
    </interactant>
    <interactant intactId="EBI-489887">
        <id>P50402</id>
        <label>EMD</label>
    </interactant>
    <organismsDiffer>false</organismsDiffer>
    <experiments>3</experiments>
</comment>
<comment type="subcellular location">
    <subcellularLocation>
        <location evidence="4">Nucleus</location>
    </subcellularLocation>
</comment>
<comment type="alternative products">
    <event type="alternative splicing"/>
    <isoform>
        <id>Q6P9A3-1</id>
        <name>1</name>
        <sequence type="displayed"/>
    </isoform>
    <isoform>
        <id>Q6P9A3-2</id>
        <name>2</name>
        <sequence type="described" ref="VSP_018379"/>
    </isoform>
</comment>
<comment type="similarity">
    <text evidence="4">Belongs to the krueppel C2H2-type zinc-finger protein family.</text>
</comment>
<comment type="sequence caution" evidence="4">
    <conflict type="erroneous gene model prediction">
        <sequence resource="EMBL-CDS" id="AAC24605"/>
    </conflict>
</comment>
<dbReference type="EMBL" id="AK092236">
    <property type="protein sequence ID" value="BAC03834.1"/>
    <property type="molecule type" value="mRNA"/>
</dbReference>
<dbReference type="EMBL" id="AK122749">
    <property type="protein sequence ID" value="BAG53703.1"/>
    <property type="molecule type" value="mRNA"/>
</dbReference>
<dbReference type="EMBL" id="AC003682">
    <property type="protein sequence ID" value="AAC24605.1"/>
    <property type="status" value="ALT_SEQ"/>
    <property type="molecule type" value="Genomic_DNA"/>
</dbReference>
<dbReference type="EMBL" id="CH471135">
    <property type="protein sequence ID" value="EAW72511.1"/>
    <property type="molecule type" value="Genomic_DNA"/>
</dbReference>
<dbReference type="EMBL" id="BC060863">
    <property type="protein sequence ID" value="AAH60863.1"/>
    <property type="molecule type" value="mRNA"/>
</dbReference>
<dbReference type="CCDS" id="CCDS12952.1">
    <molecule id="Q6P9A3-2"/>
</dbReference>
<dbReference type="CCDS" id="CCDS56106.1">
    <molecule id="Q6P9A3-1"/>
</dbReference>
<dbReference type="RefSeq" id="NP_001186224.2">
    <molecule id="Q6P9A3-1"/>
    <property type="nucleotide sequence ID" value="NM_001199295.2"/>
</dbReference>
<dbReference type="RefSeq" id="NP_694995.3">
    <molecule id="Q6P9A3-2"/>
    <property type="nucleotide sequence ID" value="NM_153263.3"/>
</dbReference>
<dbReference type="SMR" id="Q6P9A3"/>
<dbReference type="BioGRID" id="129133">
    <property type="interactions" value="11"/>
</dbReference>
<dbReference type="FunCoup" id="Q6P9A3">
    <property type="interactions" value="15"/>
</dbReference>
<dbReference type="IntAct" id="Q6P9A3">
    <property type="interactions" value="8"/>
</dbReference>
<dbReference type="STRING" id="9606.ENSP00000365407"/>
<dbReference type="GlyGen" id="Q6P9A3">
    <property type="glycosylation" value="2 sites, 1 O-linked glycan (2 sites)"/>
</dbReference>
<dbReference type="iPTMnet" id="Q6P9A3"/>
<dbReference type="PhosphoSitePlus" id="Q6P9A3"/>
<dbReference type="BioMuta" id="ZNF549"/>
<dbReference type="DMDM" id="311033505"/>
<dbReference type="jPOST" id="Q6P9A3"/>
<dbReference type="MassIVE" id="Q6P9A3"/>
<dbReference type="PaxDb" id="9606-ENSP00000365407"/>
<dbReference type="PeptideAtlas" id="Q6P9A3"/>
<dbReference type="ProteomicsDB" id="67033">
    <molecule id="Q6P9A3-1"/>
</dbReference>
<dbReference type="ProteomicsDB" id="67034">
    <molecule id="Q6P9A3-2"/>
</dbReference>
<dbReference type="Antibodypedia" id="33267">
    <property type="antibodies" value="61 antibodies from 17 providers"/>
</dbReference>
<dbReference type="DNASU" id="256051"/>
<dbReference type="Ensembl" id="ENST00000240719.7">
    <molecule id="Q6P9A3-2"/>
    <property type="protein sequence ID" value="ENSP00000240719.2"/>
    <property type="gene ID" value="ENSG00000121406.9"/>
</dbReference>
<dbReference type="Ensembl" id="ENST00000376233.8">
    <molecule id="Q6P9A3-1"/>
    <property type="protein sequence ID" value="ENSP00000365407.2"/>
    <property type="gene ID" value="ENSG00000121406.9"/>
</dbReference>
<dbReference type="GeneID" id="256051"/>
<dbReference type="KEGG" id="hsa:256051"/>
<dbReference type="MANE-Select" id="ENST00000376233.8">
    <property type="protein sequence ID" value="ENSP00000365407.2"/>
    <property type="RefSeq nucleotide sequence ID" value="NM_001199295.2"/>
    <property type="RefSeq protein sequence ID" value="NP_001186224.2"/>
</dbReference>
<dbReference type="UCSC" id="uc002qpa.3">
    <molecule id="Q6P9A3-1"/>
    <property type="organism name" value="human"/>
</dbReference>
<dbReference type="AGR" id="HGNC:26632"/>
<dbReference type="CTD" id="256051"/>
<dbReference type="DisGeNET" id="256051"/>
<dbReference type="GeneCards" id="ZNF549"/>
<dbReference type="HGNC" id="HGNC:26632">
    <property type="gene designation" value="ZNF549"/>
</dbReference>
<dbReference type="HPA" id="ENSG00000121406">
    <property type="expression patterns" value="Low tissue specificity"/>
</dbReference>
<dbReference type="MIM" id="620720">
    <property type="type" value="gene"/>
</dbReference>
<dbReference type="neXtProt" id="NX_Q6P9A3"/>
<dbReference type="PharmGKB" id="PA134905435"/>
<dbReference type="VEuPathDB" id="HostDB:ENSG00000121406"/>
<dbReference type="eggNOG" id="KOG1721">
    <property type="taxonomic scope" value="Eukaryota"/>
</dbReference>
<dbReference type="GeneTree" id="ENSGT00940000164088"/>
<dbReference type="HOGENOM" id="CLU_002678_17_1_1"/>
<dbReference type="InParanoid" id="Q6P9A3"/>
<dbReference type="OMA" id="SYDHIRH"/>
<dbReference type="OrthoDB" id="427030at2759"/>
<dbReference type="PAN-GO" id="Q6P9A3">
    <property type="GO annotations" value="4 GO annotations based on evolutionary models"/>
</dbReference>
<dbReference type="PhylomeDB" id="Q6P9A3"/>
<dbReference type="TreeFam" id="TF339848"/>
<dbReference type="PathwayCommons" id="Q6P9A3"/>
<dbReference type="Reactome" id="R-HSA-212436">
    <property type="pathway name" value="Generic Transcription Pathway"/>
</dbReference>
<dbReference type="SignaLink" id="Q6P9A3"/>
<dbReference type="BioGRID-ORCS" id="256051">
    <property type="hits" value="18 hits in 1171 CRISPR screens"/>
</dbReference>
<dbReference type="ChiTaRS" id="ZNF549">
    <property type="organism name" value="human"/>
</dbReference>
<dbReference type="GenomeRNAi" id="256051"/>
<dbReference type="Pharos" id="Q6P9A3">
    <property type="development level" value="Tdark"/>
</dbReference>
<dbReference type="PRO" id="PR:Q6P9A3"/>
<dbReference type="Proteomes" id="UP000005640">
    <property type="component" value="Chromosome 19"/>
</dbReference>
<dbReference type="RNAct" id="Q6P9A3">
    <property type="molecule type" value="protein"/>
</dbReference>
<dbReference type="Bgee" id="ENSG00000121406">
    <property type="expression patterns" value="Expressed in primordial germ cell in gonad and 99 other cell types or tissues"/>
</dbReference>
<dbReference type="ExpressionAtlas" id="Q6P9A3">
    <property type="expression patterns" value="baseline and differential"/>
</dbReference>
<dbReference type="GO" id="GO:0005634">
    <property type="term" value="C:nucleus"/>
    <property type="evidence" value="ECO:0000318"/>
    <property type="project" value="GO_Central"/>
</dbReference>
<dbReference type="GO" id="GO:0000981">
    <property type="term" value="F:DNA-binding transcription factor activity, RNA polymerase II-specific"/>
    <property type="evidence" value="ECO:0000318"/>
    <property type="project" value="GO_Central"/>
</dbReference>
<dbReference type="GO" id="GO:0000978">
    <property type="term" value="F:RNA polymerase II cis-regulatory region sequence-specific DNA binding"/>
    <property type="evidence" value="ECO:0000318"/>
    <property type="project" value="GO_Central"/>
</dbReference>
<dbReference type="GO" id="GO:0008270">
    <property type="term" value="F:zinc ion binding"/>
    <property type="evidence" value="ECO:0007669"/>
    <property type="project" value="UniProtKB-KW"/>
</dbReference>
<dbReference type="GO" id="GO:0006357">
    <property type="term" value="P:regulation of transcription by RNA polymerase II"/>
    <property type="evidence" value="ECO:0000318"/>
    <property type="project" value="GO_Central"/>
</dbReference>
<dbReference type="CDD" id="cd07765">
    <property type="entry name" value="KRAB_A-box"/>
    <property type="match status" value="1"/>
</dbReference>
<dbReference type="FunFam" id="3.30.160.60:FF:000295">
    <property type="entry name" value="zinc finger protein 19"/>
    <property type="match status" value="2"/>
</dbReference>
<dbReference type="FunFam" id="3.30.160.60:FF:001355">
    <property type="entry name" value="zinc finger protein 334"/>
    <property type="match status" value="1"/>
</dbReference>
<dbReference type="FunFam" id="3.30.160.60:FF:002343">
    <property type="entry name" value="Zinc finger protein 33A"/>
    <property type="match status" value="4"/>
</dbReference>
<dbReference type="FunFam" id="3.30.160.60:FF:000135">
    <property type="entry name" value="Zinc finger protein 358"/>
    <property type="match status" value="2"/>
</dbReference>
<dbReference type="FunFam" id="3.30.160.60:FF:001498">
    <property type="entry name" value="Zinc finger protein 404"/>
    <property type="match status" value="1"/>
</dbReference>
<dbReference type="FunFam" id="3.30.160.60:FF:002235">
    <property type="entry name" value="Zinc finger protein 549"/>
    <property type="match status" value="1"/>
</dbReference>
<dbReference type="FunFam" id="3.30.160.60:FF:002486">
    <property type="entry name" value="Zinc finger protein 549"/>
    <property type="match status" value="2"/>
</dbReference>
<dbReference type="FunFam" id="3.30.160.60:FF:001111">
    <property type="entry name" value="Zinc finger protein 92 homolog"/>
    <property type="match status" value="1"/>
</dbReference>
<dbReference type="Gene3D" id="6.10.140.140">
    <property type="match status" value="1"/>
</dbReference>
<dbReference type="Gene3D" id="3.30.160.60">
    <property type="entry name" value="Classic Zinc Finger"/>
    <property type="match status" value="15"/>
</dbReference>
<dbReference type="InterPro" id="IPR001909">
    <property type="entry name" value="KRAB"/>
</dbReference>
<dbReference type="InterPro" id="IPR036051">
    <property type="entry name" value="KRAB_dom_sf"/>
</dbReference>
<dbReference type="InterPro" id="IPR036236">
    <property type="entry name" value="Znf_C2H2_sf"/>
</dbReference>
<dbReference type="InterPro" id="IPR013087">
    <property type="entry name" value="Znf_C2H2_type"/>
</dbReference>
<dbReference type="PANTHER" id="PTHR23226:SF416">
    <property type="entry name" value="FI01424P"/>
    <property type="match status" value="1"/>
</dbReference>
<dbReference type="PANTHER" id="PTHR23226">
    <property type="entry name" value="ZINC FINGER AND SCAN DOMAIN-CONTAINING"/>
    <property type="match status" value="1"/>
</dbReference>
<dbReference type="Pfam" id="PF01352">
    <property type="entry name" value="KRAB"/>
    <property type="match status" value="1"/>
</dbReference>
<dbReference type="Pfam" id="PF00096">
    <property type="entry name" value="zf-C2H2"/>
    <property type="match status" value="12"/>
</dbReference>
<dbReference type="SMART" id="SM00349">
    <property type="entry name" value="KRAB"/>
    <property type="match status" value="1"/>
</dbReference>
<dbReference type="SMART" id="SM00355">
    <property type="entry name" value="ZnF_C2H2"/>
    <property type="match status" value="15"/>
</dbReference>
<dbReference type="SUPFAM" id="SSF57667">
    <property type="entry name" value="beta-beta-alpha zinc fingers"/>
    <property type="match status" value="8"/>
</dbReference>
<dbReference type="SUPFAM" id="SSF109640">
    <property type="entry name" value="KRAB domain (Kruppel-associated box)"/>
    <property type="match status" value="1"/>
</dbReference>
<dbReference type="PROSITE" id="PS50805">
    <property type="entry name" value="KRAB"/>
    <property type="match status" value="1"/>
</dbReference>
<dbReference type="PROSITE" id="PS00028">
    <property type="entry name" value="ZINC_FINGER_C2H2_1"/>
    <property type="match status" value="13"/>
</dbReference>
<dbReference type="PROSITE" id="PS50157">
    <property type="entry name" value="ZINC_FINGER_C2H2_2"/>
    <property type="match status" value="15"/>
</dbReference>
<accession>Q6P9A3</accession>
<accession>B3KV91</accession>
<accession>O43336</accession>
<accession>Q8NAR4</accession>
<gene>
    <name type="primary">ZNF549</name>
</gene>
<name>ZN549_HUMAN</name>
<evidence type="ECO:0000255" key="1">
    <source>
        <dbReference type="PROSITE-ProRule" id="PRU00042"/>
    </source>
</evidence>
<evidence type="ECO:0000255" key="2">
    <source>
        <dbReference type="PROSITE-ProRule" id="PRU00119"/>
    </source>
</evidence>
<evidence type="ECO:0000303" key="3">
    <source>
    </source>
</evidence>
<evidence type="ECO:0000305" key="4"/>
<evidence type="ECO:0007744" key="5">
    <source>
    </source>
</evidence>
<organism>
    <name type="scientific">Homo sapiens</name>
    <name type="common">Human</name>
    <dbReference type="NCBI Taxonomy" id="9606"/>
    <lineage>
        <taxon>Eukaryota</taxon>
        <taxon>Metazoa</taxon>
        <taxon>Chordata</taxon>
        <taxon>Craniata</taxon>
        <taxon>Vertebrata</taxon>
        <taxon>Euteleostomi</taxon>
        <taxon>Mammalia</taxon>
        <taxon>Eutheria</taxon>
        <taxon>Euarchontoglires</taxon>
        <taxon>Primates</taxon>
        <taxon>Haplorrhini</taxon>
        <taxon>Catarrhini</taxon>
        <taxon>Hominidae</taxon>
        <taxon>Homo</taxon>
    </lineage>
</organism>